<accession>B3WE10</accession>
<comment type="function">
    <text evidence="1">A non-essential component of RNA polymerase (RNAP).</text>
</comment>
<comment type="catalytic activity">
    <reaction evidence="1">
        <text>RNA(n) + a ribonucleoside 5'-triphosphate = RNA(n+1) + diphosphate</text>
        <dbReference type="Rhea" id="RHEA:21248"/>
        <dbReference type="Rhea" id="RHEA-COMP:14527"/>
        <dbReference type="Rhea" id="RHEA-COMP:17342"/>
        <dbReference type="ChEBI" id="CHEBI:33019"/>
        <dbReference type="ChEBI" id="CHEBI:61557"/>
        <dbReference type="ChEBI" id="CHEBI:140395"/>
        <dbReference type="EC" id="2.7.7.6"/>
    </reaction>
</comment>
<comment type="subunit">
    <text evidence="1">RNAP is composed of a core of 2 alpha, a beta and a beta' subunit. The core is associated with a delta subunit, and at least one of epsilon or omega. When a sigma factor is associated with the core the holoenzyme is formed, which can initiate transcription.</text>
</comment>
<comment type="similarity">
    <text evidence="1">Belongs to the RNA polymerase subunit epsilon family.</text>
</comment>
<keyword id="KW-0240">DNA-directed RNA polymerase</keyword>
<keyword id="KW-0548">Nucleotidyltransferase</keyword>
<keyword id="KW-0804">Transcription</keyword>
<keyword id="KW-0808">Transferase</keyword>
<proteinExistence type="inferred from homology"/>
<sequence>MIYKVLYQKDKIQNPRRETTQTLYLEAPSAVEARALVEKNTPYNIEFIQELSGNFLEYEEKSANFKLTTF</sequence>
<name>RPOY_LACCB</name>
<reference key="1">
    <citation type="submission" date="2008-06" db="EMBL/GenBank/DDBJ databases">
        <title>Lactobacillus casei BL23 complete genome sequence.</title>
        <authorList>
            <person name="Maze A."/>
            <person name="Boel G."/>
            <person name="Bourand A."/>
            <person name="Loux V."/>
            <person name="Gibrat J.F."/>
            <person name="Zuniga M."/>
            <person name="Hartke A."/>
            <person name="Deutscher J."/>
        </authorList>
    </citation>
    <scope>NUCLEOTIDE SEQUENCE [LARGE SCALE GENOMIC DNA]</scope>
    <source>
        <strain>BL23</strain>
    </source>
</reference>
<evidence type="ECO:0000255" key="1">
    <source>
        <dbReference type="HAMAP-Rule" id="MF_01553"/>
    </source>
</evidence>
<organism>
    <name type="scientific">Lacticaseibacillus casei (strain BL23)</name>
    <name type="common">Lactobacillus casei</name>
    <dbReference type="NCBI Taxonomy" id="543734"/>
    <lineage>
        <taxon>Bacteria</taxon>
        <taxon>Bacillati</taxon>
        <taxon>Bacillota</taxon>
        <taxon>Bacilli</taxon>
        <taxon>Lactobacillales</taxon>
        <taxon>Lactobacillaceae</taxon>
        <taxon>Lacticaseibacillus</taxon>
    </lineage>
</organism>
<feature type="chain" id="PRO_1000199618" description="DNA-directed RNA polymerase subunit epsilon">
    <location>
        <begin position="1"/>
        <end position="70"/>
    </location>
</feature>
<dbReference type="EC" id="2.7.7.6" evidence="1"/>
<dbReference type="EMBL" id="FM177140">
    <property type="protein sequence ID" value="CAQ66611.1"/>
    <property type="molecule type" value="Genomic_DNA"/>
</dbReference>
<dbReference type="SMR" id="B3WE10"/>
<dbReference type="KEGG" id="lcb:LCABL_15300"/>
<dbReference type="HOGENOM" id="CLU_187518_0_0_9"/>
<dbReference type="GO" id="GO:0000428">
    <property type="term" value="C:DNA-directed RNA polymerase complex"/>
    <property type="evidence" value="ECO:0007669"/>
    <property type="project" value="UniProtKB-KW"/>
</dbReference>
<dbReference type="GO" id="GO:0003677">
    <property type="term" value="F:DNA binding"/>
    <property type="evidence" value="ECO:0007669"/>
    <property type="project" value="UniProtKB-UniRule"/>
</dbReference>
<dbReference type="GO" id="GO:0003899">
    <property type="term" value="F:DNA-directed RNA polymerase activity"/>
    <property type="evidence" value="ECO:0007669"/>
    <property type="project" value="UniProtKB-UniRule"/>
</dbReference>
<dbReference type="GO" id="GO:0006351">
    <property type="term" value="P:DNA-templated transcription"/>
    <property type="evidence" value="ECO:0007669"/>
    <property type="project" value="UniProtKB-UniRule"/>
</dbReference>
<dbReference type="Gene3D" id="3.10.20.730">
    <property type="entry name" value="RNAP, epsilon subunit-like"/>
    <property type="match status" value="1"/>
</dbReference>
<dbReference type="HAMAP" id="MF_01553">
    <property type="entry name" value="RNApol_bact_RpoY"/>
    <property type="match status" value="1"/>
</dbReference>
<dbReference type="InterPro" id="IPR009907">
    <property type="entry name" value="RpoY"/>
</dbReference>
<dbReference type="NCBIfam" id="NF010188">
    <property type="entry name" value="PRK13667.1"/>
    <property type="match status" value="1"/>
</dbReference>
<dbReference type="Pfam" id="PF07288">
    <property type="entry name" value="RpoY"/>
    <property type="match status" value="1"/>
</dbReference>
<protein>
    <recommendedName>
        <fullName evidence="1">DNA-directed RNA polymerase subunit epsilon</fullName>
        <shortName evidence="1">RNAP epsilon subunit</shortName>
        <ecNumber evidence="1">2.7.7.6</ecNumber>
    </recommendedName>
    <alternativeName>
        <fullName evidence="1">RNA polymerase epsilon subunit</fullName>
    </alternativeName>
    <alternativeName>
        <fullName evidence="1">Transcriptase subunit epsilon</fullName>
    </alternativeName>
</protein>
<gene>
    <name evidence="1" type="primary">rpoY</name>
    <name type="ordered locus">LCABL_15300</name>
</gene>